<sequence length="226" mass="25277">MIVHIPAVLNAEQIARCRAVMQTGDWIDGRVTAGHQSRLVKNNLQLPESSPEHQELGEMIVRALWHNPLFISAVLPHTIFPPLFNRYDVGMGFGTHVDTAVRRNLDGSLRIRTDVSATLFLAGPEDYDGGELTIEDTYGTHSVRLPAGDLIIYPADSLHFVSPVTRGSRIASFFWIQSLIRDKTQRNLLFNLDTAIMRLTEDVAGNPALVSLQGVYHNLLRQWAEI</sequence>
<proteinExistence type="inferred from homology"/>
<accession>B2ICK3</accession>
<gene>
    <name type="ordered locus">Bind_0236</name>
</gene>
<protein>
    <recommendedName>
        <fullName evidence="1">PKHD-type hydroxylase Bind_0236</fullName>
        <ecNumber evidence="1">1.14.11.-</ecNumber>
    </recommendedName>
</protein>
<keyword id="KW-0223">Dioxygenase</keyword>
<keyword id="KW-0408">Iron</keyword>
<keyword id="KW-0479">Metal-binding</keyword>
<keyword id="KW-0560">Oxidoreductase</keyword>
<keyword id="KW-1185">Reference proteome</keyword>
<keyword id="KW-0847">Vitamin C</keyword>
<feature type="chain" id="PRO_0000346461" description="PKHD-type hydroxylase Bind_0236">
    <location>
        <begin position="1"/>
        <end position="226"/>
    </location>
</feature>
<feature type="domain" description="Fe2OG dioxygenase" evidence="1">
    <location>
        <begin position="78"/>
        <end position="178"/>
    </location>
</feature>
<feature type="binding site" evidence="1">
    <location>
        <position position="96"/>
    </location>
    <ligand>
        <name>Fe cation</name>
        <dbReference type="ChEBI" id="CHEBI:24875"/>
    </ligand>
</feature>
<feature type="binding site" evidence="1">
    <location>
        <position position="98"/>
    </location>
    <ligand>
        <name>Fe cation</name>
        <dbReference type="ChEBI" id="CHEBI:24875"/>
    </ligand>
</feature>
<feature type="binding site" evidence="1">
    <location>
        <position position="159"/>
    </location>
    <ligand>
        <name>Fe cation</name>
        <dbReference type="ChEBI" id="CHEBI:24875"/>
    </ligand>
</feature>
<feature type="binding site" evidence="1">
    <location>
        <position position="169"/>
    </location>
    <ligand>
        <name>2-oxoglutarate</name>
        <dbReference type="ChEBI" id="CHEBI:16810"/>
    </ligand>
</feature>
<evidence type="ECO:0000255" key="1">
    <source>
        <dbReference type="HAMAP-Rule" id="MF_00657"/>
    </source>
</evidence>
<name>Y236_BEII9</name>
<dbReference type="EC" id="1.14.11.-" evidence="1"/>
<dbReference type="EMBL" id="CP001016">
    <property type="protein sequence ID" value="ACB93892.1"/>
    <property type="molecule type" value="Genomic_DNA"/>
</dbReference>
<dbReference type="RefSeq" id="WP_012383250.1">
    <property type="nucleotide sequence ID" value="NC_010581.1"/>
</dbReference>
<dbReference type="SMR" id="B2ICK3"/>
<dbReference type="STRING" id="395963.Bind_0236"/>
<dbReference type="KEGG" id="bid:Bind_0236"/>
<dbReference type="eggNOG" id="COG3128">
    <property type="taxonomic scope" value="Bacteria"/>
</dbReference>
<dbReference type="HOGENOM" id="CLU_106663_0_0_5"/>
<dbReference type="OrthoDB" id="9812472at2"/>
<dbReference type="Proteomes" id="UP000001695">
    <property type="component" value="Chromosome"/>
</dbReference>
<dbReference type="GO" id="GO:0016706">
    <property type="term" value="F:2-oxoglutarate-dependent dioxygenase activity"/>
    <property type="evidence" value="ECO:0007669"/>
    <property type="project" value="UniProtKB-UniRule"/>
</dbReference>
<dbReference type="GO" id="GO:0005506">
    <property type="term" value="F:iron ion binding"/>
    <property type="evidence" value="ECO:0007669"/>
    <property type="project" value="UniProtKB-UniRule"/>
</dbReference>
<dbReference type="GO" id="GO:0031418">
    <property type="term" value="F:L-ascorbic acid binding"/>
    <property type="evidence" value="ECO:0007669"/>
    <property type="project" value="UniProtKB-KW"/>
</dbReference>
<dbReference type="GO" id="GO:0006974">
    <property type="term" value="P:DNA damage response"/>
    <property type="evidence" value="ECO:0007669"/>
    <property type="project" value="TreeGrafter"/>
</dbReference>
<dbReference type="GO" id="GO:0006879">
    <property type="term" value="P:intracellular iron ion homeostasis"/>
    <property type="evidence" value="ECO:0007669"/>
    <property type="project" value="TreeGrafter"/>
</dbReference>
<dbReference type="Gene3D" id="2.60.120.620">
    <property type="entry name" value="q2cbj1_9rhob like domain"/>
    <property type="match status" value="1"/>
</dbReference>
<dbReference type="Gene3D" id="4.10.860.20">
    <property type="entry name" value="Rabenosyn, Rab binding domain"/>
    <property type="match status" value="1"/>
</dbReference>
<dbReference type="HAMAP" id="MF_00657">
    <property type="entry name" value="Hydroxyl_YbiX"/>
    <property type="match status" value="1"/>
</dbReference>
<dbReference type="InterPro" id="IPR005123">
    <property type="entry name" value="Oxoglu/Fe-dep_dioxygenase_dom"/>
</dbReference>
<dbReference type="InterPro" id="IPR041097">
    <property type="entry name" value="PKHD_C"/>
</dbReference>
<dbReference type="InterPro" id="IPR023550">
    <property type="entry name" value="PKHD_hydroxylase"/>
</dbReference>
<dbReference type="InterPro" id="IPR006620">
    <property type="entry name" value="Pro_4_hyd_alph"/>
</dbReference>
<dbReference type="InterPro" id="IPR044862">
    <property type="entry name" value="Pro_4_hyd_alph_FE2OG_OXY"/>
</dbReference>
<dbReference type="NCBIfam" id="NF003973">
    <property type="entry name" value="PRK05467.1-2"/>
    <property type="match status" value="1"/>
</dbReference>
<dbReference type="NCBIfam" id="NF003974">
    <property type="entry name" value="PRK05467.1-3"/>
    <property type="match status" value="1"/>
</dbReference>
<dbReference type="NCBIfam" id="NF003975">
    <property type="entry name" value="PRK05467.1-4"/>
    <property type="match status" value="1"/>
</dbReference>
<dbReference type="PANTHER" id="PTHR41536">
    <property type="entry name" value="PKHD-TYPE HYDROXYLASE YBIX"/>
    <property type="match status" value="1"/>
</dbReference>
<dbReference type="PANTHER" id="PTHR41536:SF1">
    <property type="entry name" value="PKHD-TYPE HYDROXYLASE YBIX"/>
    <property type="match status" value="1"/>
</dbReference>
<dbReference type="Pfam" id="PF13640">
    <property type="entry name" value="2OG-FeII_Oxy_3"/>
    <property type="match status" value="1"/>
</dbReference>
<dbReference type="Pfam" id="PF18331">
    <property type="entry name" value="PKHD_C"/>
    <property type="match status" value="1"/>
</dbReference>
<dbReference type="SMART" id="SM00702">
    <property type="entry name" value="P4Hc"/>
    <property type="match status" value="1"/>
</dbReference>
<dbReference type="PROSITE" id="PS51471">
    <property type="entry name" value="FE2OG_OXY"/>
    <property type="match status" value="1"/>
</dbReference>
<reference key="1">
    <citation type="journal article" date="2010" name="J. Bacteriol.">
        <title>Complete genome sequence of Beijerinckia indica subsp. indica.</title>
        <authorList>
            <person name="Tamas I."/>
            <person name="Dedysh S.N."/>
            <person name="Liesack W."/>
            <person name="Stott M.B."/>
            <person name="Alam M."/>
            <person name="Murrell J.C."/>
            <person name="Dunfield P.F."/>
        </authorList>
    </citation>
    <scope>NUCLEOTIDE SEQUENCE [LARGE SCALE GENOMIC DNA]</scope>
    <source>
        <strain>ATCC 9039 / DSM 1715 / NCIMB 8712</strain>
    </source>
</reference>
<organism>
    <name type="scientific">Beijerinckia indica subsp. indica (strain ATCC 9039 / DSM 1715 / NCIMB 8712)</name>
    <dbReference type="NCBI Taxonomy" id="395963"/>
    <lineage>
        <taxon>Bacteria</taxon>
        <taxon>Pseudomonadati</taxon>
        <taxon>Pseudomonadota</taxon>
        <taxon>Alphaproteobacteria</taxon>
        <taxon>Hyphomicrobiales</taxon>
        <taxon>Beijerinckiaceae</taxon>
        <taxon>Beijerinckia</taxon>
    </lineage>
</organism>
<comment type="cofactor">
    <cofactor evidence="1">
        <name>Fe(2+)</name>
        <dbReference type="ChEBI" id="CHEBI:29033"/>
    </cofactor>
    <text evidence="1">Binds 1 Fe(2+) ion per subunit.</text>
</comment>
<comment type="cofactor">
    <cofactor evidence="1">
        <name>L-ascorbate</name>
        <dbReference type="ChEBI" id="CHEBI:38290"/>
    </cofactor>
</comment>